<organism>
    <name type="scientific">Serratia proteamaculans (strain 568)</name>
    <dbReference type="NCBI Taxonomy" id="399741"/>
    <lineage>
        <taxon>Bacteria</taxon>
        <taxon>Pseudomonadati</taxon>
        <taxon>Pseudomonadota</taxon>
        <taxon>Gammaproteobacteria</taxon>
        <taxon>Enterobacterales</taxon>
        <taxon>Yersiniaceae</taxon>
        <taxon>Serratia</taxon>
    </lineage>
</organism>
<proteinExistence type="inferred from homology"/>
<evidence type="ECO:0000255" key="1">
    <source>
        <dbReference type="HAMAP-Rule" id="MF_01113"/>
    </source>
</evidence>
<gene>
    <name evidence="1" type="primary">dinB</name>
    <name type="ordered locus">Spro_0962</name>
</gene>
<sequence>MRKIIHVDMDCFFAAVEMRDDPSLRDIPLAIGGSADRRGVISTANYPARRYGVHSAMSTAMALKLCPHLKLLPGRMAAYKEASQHIREIFARYTPLIEPLSLDEAYLDVTDCSQCNGSATLIAEQIRQTISDELNLTASAGIAPIKFLAKIASELNKPNGQYVITPAQVPAFLQQLPLSKIPGVGKVTAKRLEEVGLITCADVQQYDLAALLKRFGKFGRVLWERCQGIDLREVSPERLRKSVGVERTLAEDIHDWEDCEALIVDKLYPELELRLRKVKPDLHIARQGVKLKFQDFQQTTQEHVWPVLNKDDLINVARQVWRERREGRGVRLVGLHVTLLDPQLERQLLLPWE</sequence>
<reference key="1">
    <citation type="submission" date="2007-09" db="EMBL/GenBank/DDBJ databases">
        <title>Complete sequence of chromosome of Serratia proteamaculans 568.</title>
        <authorList>
            <consortium name="US DOE Joint Genome Institute"/>
            <person name="Copeland A."/>
            <person name="Lucas S."/>
            <person name="Lapidus A."/>
            <person name="Barry K."/>
            <person name="Glavina del Rio T."/>
            <person name="Dalin E."/>
            <person name="Tice H."/>
            <person name="Pitluck S."/>
            <person name="Chain P."/>
            <person name="Malfatti S."/>
            <person name="Shin M."/>
            <person name="Vergez L."/>
            <person name="Schmutz J."/>
            <person name="Larimer F."/>
            <person name="Land M."/>
            <person name="Hauser L."/>
            <person name="Kyrpides N."/>
            <person name="Kim E."/>
            <person name="Taghavi S."/>
            <person name="Newman L."/>
            <person name="Vangronsveld J."/>
            <person name="van der Lelie D."/>
            <person name="Richardson P."/>
        </authorList>
    </citation>
    <scope>NUCLEOTIDE SEQUENCE [LARGE SCALE GENOMIC DNA]</scope>
    <source>
        <strain>568</strain>
    </source>
</reference>
<keyword id="KW-0963">Cytoplasm</keyword>
<keyword id="KW-0227">DNA damage</keyword>
<keyword id="KW-0234">DNA repair</keyword>
<keyword id="KW-0235">DNA replication</keyword>
<keyword id="KW-0238">DNA-binding</keyword>
<keyword id="KW-0239">DNA-directed DNA polymerase</keyword>
<keyword id="KW-0460">Magnesium</keyword>
<keyword id="KW-0479">Metal-binding</keyword>
<keyword id="KW-0515">Mutator protein</keyword>
<keyword id="KW-0548">Nucleotidyltransferase</keyword>
<keyword id="KW-0808">Transferase</keyword>
<protein>
    <recommendedName>
        <fullName evidence="1">DNA polymerase IV</fullName>
        <shortName evidence="1">Pol IV</shortName>
        <ecNumber evidence="1">2.7.7.7</ecNumber>
    </recommendedName>
</protein>
<feature type="chain" id="PRO_1000084924" description="DNA polymerase IV">
    <location>
        <begin position="1"/>
        <end position="353"/>
    </location>
</feature>
<feature type="domain" description="UmuC" evidence="1">
    <location>
        <begin position="4"/>
        <end position="185"/>
    </location>
</feature>
<feature type="active site" evidence="1">
    <location>
        <position position="104"/>
    </location>
</feature>
<feature type="binding site" evidence="1">
    <location>
        <position position="8"/>
    </location>
    <ligand>
        <name>Mg(2+)</name>
        <dbReference type="ChEBI" id="CHEBI:18420"/>
    </ligand>
</feature>
<feature type="binding site" evidence="1">
    <location>
        <position position="103"/>
    </location>
    <ligand>
        <name>Mg(2+)</name>
        <dbReference type="ChEBI" id="CHEBI:18420"/>
    </ligand>
</feature>
<feature type="site" description="Substrate discrimination" evidence="1">
    <location>
        <position position="13"/>
    </location>
</feature>
<accession>A8GAC8</accession>
<comment type="function">
    <text evidence="1">Poorly processive, error-prone DNA polymerase involved in untargeted mutagenesis. Copies undamaged DNA at stalled replication forks, which arise in vivo from mismatched or misaligned primer ends. These misaligned primers can be extended by PolIV. Exhibits no 3'-5' exonuclease (proofreading) activity. May be involved in translesional synthesis, in conjunction with the beta clamp from PolIII.</text>
</comment>
<comment type="catalytic activity">
    <reaction evidence="1">
        <text>DNA(n) + a 2'-deoxyribonucleoside 5'-triphosphate = DNA(n+1) + diphosphate</text>
        <dbReference type="Rhea" id="RHEA:22508"/>
        <dbReference type="Rhea" id="RHEA-COMP:17339"/>
        <dbReference type="Rhea" id="RHEA-COMP:17340"/>
        <dbReference type="ChEBI" id="CHEBI:33019"/>
        <dbReference type="ChEBI" id="CHEBI:61560"/>
        <dbReference type="ChEBI" id="CHEBI:173112"/>
        <dbReference type="EC" id="2.7.7.7"/>
    </reaction>
</comment>
<comment type="cofactor">
    <cofactor evidence="1">
        <name>Mg(2+)</name>
        <dbReference type="ChEBI" id="CHEBI:18420"/>
    </cofactor>
    <text evidence="1">Binds 2 magnesium ions per subunit.</text>
</comment>
<comment type="subunit">
    <text evidence="1">Monomer.</text>
</comment>
<comment type="subcellular location">
    <subcellularLocation>
        <location evidence="1">Cytoplasm</location>
    </subcellularLocation>
</comment>
<comment type="similarity">
    <text evidence="1">Belongs to the DNA polymerase type-Y family.</text>
</comment>
<name>DPO4_SERP5</name>
<dbReference type="EC" id="2.7.7.7" evidence="1"/>
<dbReference type="EMBL" id="CP000826">
    <property type="protein sequence ID" value="ABV40068.1"/>
    <property type="molecule type" value="Genomic_DNA"/>
</dbReference>
<dbReference type="SMR" id="A8GAC8"/>
<dbReference type="STRING" id="399741.Spro_0962"/>
<dbReference type="KEGG" id="spe:Spro_0962"/>
<dbReference type="eggNOG" id="COG0389">
    <property type="taxonomic scope" value="Bacteria"/>
</dbReference>
<dbReference type="HOGENOM" id="CLU_012348_1_2_6"/>
<dbReference type="OrthoDB" id="9808813at2"/>
<dbReference type="GO" id="GO:0005829">
    <property type="term" value="C:cytosol"/>
    <property type="evidence" value="ECO:0007669"/>
    <property type="project" value="TreeGrafter"/>
</dbReference>
<dbReference type="GO" id="GO:0003684">
    <property type="term" value="F:damaged DNA binding"/>
    <property type="evidence" value="ECO:0007669"/>
    <property type="project" value="InterPro"/>
</dbReference>
<dbReference type="GO" id="GO:0003887">
    <property type="term" value="F:DNA-directed DNA polymerase activity"/>
    <property type="evidence" value="ECO:0007669"/>
    <property type="project" value="UniProtKB-UniRule"/>
</dbReference>
<dbReference type="GO" id="GO:0000287">
    <property type="term" value="F:magnesium ion binding"/>
    <property type="evidence" value="ECO:0007669"/>
    <property type="project" value="UniProtKB-UniRule"/>
</dbReference>
<dbReference type="GO" id="GO:0006261">
    <property type="term" value="P:DNA-templated DNA replication"/>
    <property type="evidence" value="ECO:0007669"/>
    <property type="project" value="UniProtKB-UniRule"/>
</dbReference>
<dbReference type="GO" id="GO:0042276">
    <property type="term" value="P:error-prone translesion synthesis"/>
    <property type="evidence" value="ECO:0007669"/>
    <property type="project" value="TreeGrafter"/>
</dbReference>
<dbReference type="GO" id="GO:0009432">
    <property type="term" value="P:SOS response"/>
    <property type="evidence" value="ECO:0007669"/>
    <property type="project" value="TreeGrafter"/>
</dbReference>
<dbReference type="CDD" id="cd03586">
    <property type="entry name" value="PolY_Pol_IV_kappa"/>
    <property type="match status" value="1"/>
</dbReference>
<dbReference type="FunFam" id="1.10.150.20:FF:000019">
    <property type="entry name" value="DNA polymerase IV"/>
    <property type="match status" value="1"/>
</dbReference>
<dbReference type="FunFam" id="3.30.1490.100:FF:000002">
    <property type="entry name" value="DNA polymerase IV"/>
    <property type="match status" value="1"/>
</dbReference>
<dbReference type="FunFam" id="3.30.70.270:FF:000002">
    <property type="entry name" value="DNA polymerase IV"/>
    <property type="match status" value="1"/>
</dbReference>
<dbReference type="FunFam" id="3.40.1170.60:FF:000001">
    <property type="entry name" value="DNA polymerase IV"/>
    <property type="match status" value="1"/>
</dbReference>
<dbReference type="Gene3D" id="3.30.70.270">
    <property type="match status" value="1"/>
</dbReference>
<dbReference type="Gene3D" id="3.40.1170.60">
    <property type="match status" value="1"/>
</dbReference>
<dbReference type="Gene3D" id="1.10.150.20">
    <property type="entry name" value="5' to 3' exonuclease, C-terminal subdomain"/>
    <property type="match status" value="1"/>
</dbReference>
<dbReference type="Gene3D" id="3.30.1490.100">
    <property type="entry name" value="DNA polymerase, Y-family, little finger domain"/>
    <property type="match status" value="1"/>
</dbReference>
<dbReference type="HAMAP" id="MF_01113">
    <property type="entry name" value="DNApol_IV"/>
    <property type="match status" value="1"/>
</dbReference>
<dbReference type="InterPro" id="IPR043502">
    <property type="entry name" value="DNA/RNA_pol_sf"/>
</dbReference>
<dbReference type="InterPro" id="IPR036775">
    <property type="entry name" value="DNA_pol_Y-fam_lit_finger_sf"/>
</dbReference>
<dbReference type="InterPro" id="IPR017961">
    <property type="entry name" value="DNA_pol_Y-fam_little_finger"/>
</dbReference>
<dbReference type="InterPro" id="IPR050116">
    <property type="entry name" value="DNA_polymerase-Y"/>
</dbReference>
<dbReference type="InterPro" id="IPR022880">
    <property type="entry name" value="DNApol_IV"/>
</dbReference>
<dbReference type="InterPro" id="IPR053848">
    <property type="entry name" value="IMS_HHH_1"/>
</dbReference>
<dbReference type="InterPro" id="IPR043128">
    <property type="entry name" value="Rev_trsase/Diguanyl_cyclase"/>
</dbReference>
<dbReference type="InterPro" id="IPR001126">
    <property type="entry name" value="UmuC"/>
</dbReference>
<dbReference type="NCBIfam" id="NF002677">
    <property type="entry name" value="PRK02406.1"/>
    <property type="match status" value="1"/>
</dbReference>
<dbReference type="PANTHER" id="PTHR11076:SF33">
    <property type="entry name" value="DNA POLYMERASE KAPPA"/>
    <property type="match status" value="1"/>
</dbReference>
<dbReference type="PANTHER" id="PTHR11076">
    <property type="entry name" value="DNA REPAIR POLYMERASE UMUC / TRANSFERASE FAMILY MEMBER"/>
    <property type="match status" value="1"/>
</dbReference>
<dbReference type="Pfam" id="PF00817">
    <property type="entry name" value="IMS"/>
    <property type="match status" value="1"/>
</dbReference>
<dbReference type="Pfam" id="PF11799">
    <property type="entry name" value="IMS_C"/>
    <property type="match status" value="1"/>
</dbReference>
<dbReference type="Pfam" id="PF21999">
    <property type="entry name" value="IMS_HHH_1"/>
    <property type="match status" value="1"/>
</dbReference>
<dbReference type="SUPFAM" id="SSF56672">
    <property type="entry name" value="DNA/RNA polymerases"/>
    <property type="match status" value="1"/>
</dbReference>
<dbReference type="SUPFAM" id="SSF100879">
    <property type="entry name" value="Lesion bypass DNA polymerase (Y-family), little finger domain"/>
    <property type="match status" value="1"/>
</dbReference>
<dbReference type="PROSITE" id="PS50173">
    <property type="entry name" value="UMUC"/>
    <property type="match status" value="1"/>
</dbReference>